<gene>
    <name type="primary">intA</name>
    <name type="synonym">intX</name>
    <name evidence="5" type="synonym">slpA</name>
    <name type="ordered locus">b2622</name>
    <name type="ordered locus">JW2602</name>
</gene>
<organism>
    <name type="scientific">Escherichia coli (strain K12)</name>
    <dbReference type="NCBI Taxonomy" id="83333"/>
    <lineage>
        <taxon>Bacteria</taxon>
        <taxon>Pseudomonadati</taxon>
        <taxon>Pseudomonadota</taxon>
        <taxon>Gammaproteobacteria</taxon>
        <taxon>Enterobacterales</taxon>
        <taxon>Enterobacteriaceae</taxon>
        <taxon>Escherichia</taxon>
    </lineage>
</organism>
<protein>
    <recommendedName>
        <fullName evidence="6">Prophage integrase IntA</fullName>
    </recommendedName>
    <alternativeName>
        <fullName evidence="5">Prophage CP4-57 integrase SlpA</fullName>
    </alternativeName>
</protein>
<evidence type="ECO:0000255" key="1">
    <source>
        <dbReference type="PROSITE-ProRule" id="PRU01246"/>
    </source>
</evidence>
<evidence type="ECO:0000255" key="2">
    <source>
        <dbReference type="PROSITE-ProRule" id="PRU01248"/>
    </source>
</evidence>
<evidence type="ECO:0000269" key="3">
    <source>
    </source>
</evidence>
<evidence type="ECO:0000269" key="4">
    <source>
    </source>
</evidence>
<evidence type="ECO:0000303" key="5">
    <source>
    </source>
</evidence>
<evidence type="ECO:0000305" key="6"/>
<reference key="1">
    <citation type="journal article" date="1994" name="J. Bacteriol.">
        <title>Excision of a P4-like cryptic prophage leads to Alp protease expression in Escherichia coli.</title>
        <authorList>
            <person name="Kirby J.E."/>
            <person name="Trempy J.E."/>
            <person name="Gottesman S."/>
        </authorList>
    </citation>
    <scope>NUCLEOTIDE SEQUENCE [GENOMIC DNA]</scope>
    <scope>INDUCTION BY ALPA</scope>
    <scope>DISRUPTION PHENOTYPE</scope>
    <source>
        <strain>K12</strain>
    </source>
</reference>
<reference key="2">
    <citation type="journal article" date="1997" name="Science">
        <title>The complete genome sequence of Escherichia coli K-12.</title>
        <authorList>
            <person name="Blattner F.R."/>
            <person name="Plunkett G. III"/>
            <person name="Bloch C.A."/>
            <person name="Perna N.T."/>
            <person name="Burland V."/>
            <person name="Riley M."/>
            <person name="Collado-Vides J."/>
            <person name="Glasner J.D."/>
            <person name="Rode C.K."/>
            <person name="Mayhew G.F."/>
            <person name="Gregor J."/>
            <person name="Davis N.W."/>
            <person name="Kirkpatrick H.A."/>
            <person name="Goeden M.A."/>
            <person name="Rose D.J."/>
            <person name="Mau B."/>
            <person name="Shao Y."/>
        </authorList>
    </citation>
    <scope>NUCLEOTIDE SEQUENCE [LARGE SCALE GENOMIC DNA]</scope>
    <source>
        <strain>K12 / MG1655 / ATCC 47076</strain>
    </source>
</reference>
<reference key="3">
    <citation type="journal article" date="2006" name="Mol. Syst. Biol.">
        <title>Highly accurate genome sequences of Escherichia coli K-12 strains MG1655 and W3110.</title>
        <authorList>
            <person name="Hayashi K."/>
            <person name="Morooka N."/>
            <person name="Yamamoto Y."/>
            <person name="Fujita K."/>
            <person name="Isono K."/>
            <person name="Choi S."/>
            <person name="Ohtsubo E."/>
            <person name="Baba T."/>
            <person name="Wanner B.L."/>
            <person name="Mori H."/>
            <person name="Horiuchi T."/>
        </authorList>
    </citation>
    <scope>NUCLEOTIDE SEQUENCE [LARGE SCALE GENOMIC DNA]</scope>
    <source>
        <strain>K12 / W3110 / ATCC 27325 / DSM 5911</strain>
    </source>
</reference>
<reference key="4">
    <citation type="journal article" date="1997" name="DNA Res.">
        <title>Construction of a contiguous 874-kb sequence of the Escherichia coli-K12 genome corresponding to 50.0-68.8 min on the linkage map and analysis of its sequence features.</title>
        <authorList>
            <person name="Yamamoto Y."/>
            <person name="Aiba H."/>
            <person name="Baba T."/>
            <person name="Hayashi K."/>
            <person name="Inada T."/>
            <person name="Isono K."/>
            <person name="Itoh T."/>
            <person name="Kimura S."/>
            <person name="Kitagawa M."/>
            <person name="Makino K."/>
            <person name="Miki T."/>
            <person name="Mitsuhashi N."/>
            <person name="Mizobuchi K."/>
            <person name="Mori H."/>
            <person name="Nakade S."/>
            <person name="Nakamura Y."/>
            <person name="Nashimoto H."/>
            <person name="Oshima T."/>
            <person name="Oyama S."/>
            <person name="Saito N."/>
            <person name="Sampei G."/>
            <person name="Satoh Y."/>
            <person name="Sivasundaram S."/>
            <person name="Tagami H."/>
            <person name="Takahashi H."/>
            <person name="Takeda J."/>
            <person name="Takemoto K."/>
            <person name="Uehara K."/>
            <person name="Wada C."/>
            <person name="Yamagata S."/>
            <person name="Horiuchi T."/>
        </authorList>
    </citation>
    <scope>NUCLEOTIDE SEQUENCE [LARGE SCALE GENOMIC DNA] OF 1-99</scope>
    <source>
        <strain>K12 / W3110 / ATCC 27325 / DSM 5911</strain>
    </source>
</reference>
<reference key="5">
    <citation type="journal article" date="1994" name="Proc. Natl. Acad. Sci. U.S.A.">
        <title>A tRNA-like structure is present in 10Sa RNA, a small stable RNA from Escherichia coli.</title>
        <authorList>
            <person name="Komine Y."/>
            <person name="Kitabatake M."/>
            <person name="Yokogawa T."/>
            <person name="Nishikawa K."/>
            <person name="Inokuchi H."/>
        </authorList>
    </citation>
    <scope>NUCLEOTIDE SEQUENCE [GENOMIC DNA] OF 1-99</scope>
    <source>
        <strain>K12</strain>
    </source>
</reference>
<reference key="6">
    <citation type="journal article" date="1994" name="J. Bacteriol.">
        <title>Alp suppression of Lon: dependence on the slpA gene.</title>
        <authorList>
            <person name="Trempy J.E."/>
            <person name="Kirby J.E."/>
            <person name="Gottesman S."/>
        </authorList>
    </citation>
    <scope>FUNCTION</scope>
    <scope>INDUCTION</scope>
    <source>
        <strain>K12</strain>
    </source>
</reference>
<sequence length="413" mass="46652">MARKTKPLTDTEIKAAKPKDADYQLYDGDGLTLLIKSSGSKLWQFRYYRPLTKQRTKQSFGAYPAVSLSDARKLRAESKVLLAKDIDPQEHQKEQVRNSQEAKTNTFLLVAERWWNVKKTSVTEDYADDIWRSLERDIFPAIGDISITEIKAHTLVKAVQPVQARGALETVRRLCQRINEVMIYAQNTGLIDAVPSVNIGKAFEKPQKKNMPSIRPDQLPQLMHTMRTASISMSTRCLFMWQLLTITRPAEAAEARWDEIDFNASEWKIPAARMKMNRDHTVPLSDGALAILEMMKPLSGGREFIFPSRIKPNQPMNSQTVNAALKRAGLGGVLVSHGLRSIASTALNEEGFPPDVIEAALAHVDKNEVRRAYNRSDYLEQRRPMMQWWADLVKAADSGSIVLTHLSKIRLVG</sequence>
<keyword id="KW-0229">DNA integration</keyword>
<keyword id="KW-0233">DNA recombination</keyword>
<keyword id="KW-0238">DNA-binding</keyword>
<keyword id="KW-1185">Reference proteome</keyword>
<keyword id="KW-1179">Viral genome integration</keyword>
<keyword id="KW-1160">Virus entry into host cell</keyword>
<proteinExistence type="evidence at protein level"/>
<accession>P32053</accession>
<feature type="chain" id="PRO_0000197511" description="Prophage integrase IntA">
    <location>
        <begin position="1"/>
        <end position="413"/>
    </location>
</feature>
<feature type="domain" description="Core-binding (CB)" evidence="2">
    <location>
        <begin position="105"/>
        <end position="186"/>
    </location>
</feature>
<feature type="domain" description="Tyr recombinase" evidence="1">
    <location>
        <begin position="209"/>
        <end position="386"/>
    </location>
</feature>
<feature type="active site" evidence="1">
    <location>
        <position position="248"/>
    </location>
</feature>
<feature type="active site" evidence="1">
    <location>
        <position position="275"/>
    </location>
</feature>
<feature type="active site" evidence="1">
    <location>
        <position position="337"/>
    </location>
</feature>
<feature type="active site" evidence="1">
    <location>
        <position position="340"/>
    </location>
</feature>
<feature type="active site" evidence="1">
    <location>
        <position position="363"/>
    </location>
</feature>
<feature type="active site" description="O-(3'-phospho-DNA)-tyrosine intermediate" evidence="1">
    <location>
        <position position="373"/>
    </location>
</feature>
<dbReference type="EMBL" id="U03737">
    <property type="protein sequence ID" value="AAA18417.1"/>
    <property type="molecule type" value="Unassigned_DNA"/>
</dbReference>
<dbReference type="EMBL" id="U36840">
    <property type="protein sequence ID" value="AAA79791.1"/>
    <property type="molecule type" value="Genomic_DNA"/>
</dbReference>
<dbReference type="EMBL" id="U00096">
    <property type="protein sequence ID" value="AAC75670.1"/>
    <property type="molecule type" value="Genomic_DNA"/>
</dbReference>
<dbReference type="EMBL" id="AP009048">
    <property type="protein sequence ID" value="BAA20921.2"/>
    <property type="molecule type" value="Genomic_DNA"/>
</dbReference>
<dbReference type="EMBL" id="D12501">
    <property type="protein sequence ID" value="BAA20981.1"/>
    <property type="molecule type" value="Genomic_DNA"/>
</dbReference>
<dbReference type="PIR" id="H65040">
    <property type="entry name" value="H65040"/>
</dbReference>
<dbReference type="RefSeq" id="NP_417111.1">
    <property type="nucleotide sequence ID" value="NC_000913.3"/>
</dbReference>
<dbReference type="RefSeq" id="WP_000101723.1">
    <property type="nucleotide sequence ID" value="NZ_LN832404.1"/>
</dbReference>
<dbReference type="SMR" id="P32053"/>
<dbReference type="BioGRID" id="4260622">
    <property type="interactions" value="16"/>
</dbReference>
<dbReference type="BioGRID" id="850520">
    <property type="interactions" value="1"/>
</dbReference>
<dbReference type="DIP" id="DIP-10034N"/>
<dbReference type="FunCoup" id="P32053">
    <property type="interactions" value="154"/>
</dbReference>
<dbReference type="IntAct" id="P32053">
    <property type="interactions" value="26"/>
</dbReference>
<dbReference type="STRING" id="511145.b2622"/>
<dbReference type="PaxDb" id="511145-b2622"/>
<dbReference type="EnsemblBacteria" id="AAC75670">
    <property type="protein sequence ID" value="AAC75670"/>
    <property type="gene ID" value="b2622"/>
</dbReference>
<dbReference type="GeneID" id="946160"/>
<dbReference type="KEGG" id="ecj:JW2602"/>
<dbReference type="KEGG" id="eco:b2622"/>
<dbReference type="PATRIC" id="fig|1411691.4.peg.4117"/>
<dbReference type="EchoBASE" id="EB1731"/>
<dbReference type="eggNOG" id="COG0582">
    <property type="taxonomic scope" value="Bacteria"/>
</dbReference>
<dbReference type="HOGENOM" id="CLU_027562_0_0_6"/>
<dbReference type="InParanoid" id="P32053"/>
<dbReference type="OMA" id="DRNPRTH"/>
<dbReference type="OrthoDB" id="9795573at2"/>
<dbReference type="PhylomeDB" id="P32053"/>
<dbReference type="BioCyc" id="EcoCyc:EG11783-MONOMER"/>
<dbReference type="PRO" id="PR:P32053"/>
<dbReference type="Proteomes" id="UP000000625">
    <property type="component" value="Chromosome"/>
</dbReference>
<dbReference type="GO" id="GO:0003677">
    <property type="term" value="F:DNA binding"/>
    <property type="evidence" value="ECO:0007669"/>
    <property type="project" value="UniProtKB-KW"/>
</dbReference>
<dbReference type="GO" id="GO:0008979">
    <property type="term" value="F:prophage integrase activity"/>
    <property type="evidence" value="ECO:0000315"/>
    <property type="project" value="EcoCyc"/>
</dbReference>
<dbReference type="GO" id="GO:0006310">
    <property type="term" value="P:DNA recombination"/>
    <property type="evidence" value="ECO:0007669"/>
    <property type="project" value="UniProtKB-KW"/>
</dbReference>
<dbReference type="GO" id="GO:0032359">
    <property type="term" value="P:provirus excision"/>
    <property type="evidence" value="ECO:0000315"/>
    <property type="project" value="EcoCyc"/>
</dbReference>
<dbReference type="GO" id="GO:0046718">
    <property type="term" value="P:symbiont entry into host cell"/>
    <property type="evidence" value="ECO:0007669"/>
    <property type="project" value="UniProtKB-KW"/>
</dbReference>
<dbReference type="GO" id="GO:0044826">
    <property type="term" value="P:viral genome integration into host DNA"/>
    <property type="evidence" value="ECO:0007669"/>
    <property type="project" value="UniProtKB-KW"/>
</dbReference>
<dbReference type="CDD" id="cd00801">
    <property type="entry name" value="INT_P4_C"/>
    <property type="match status" value="1"/>
</dbReference>
<dbReference type="FunFam" id="1.10.150.130:FF:000004">
    <property type="entry name" value="Phage integrase"/>
    <property type="match status" value="1"/>
</dbReference>
<dbReference type="FunFam" id="1.10.443.10:FF:000005">
    <property type="entry name" value="Phage integrase"/>
    <property type="match status" value="1"/>
</dbReference>
<dbReference type="FunFam" id="3.30.160.390:FF:000001">
    <property type="entry name" value="Phage integrase"/>
    <property type="match status" value="1"/>
</dbReference>
<dbReference type="Gene3D" id="1.10.150.130">
    <property type="match status" value="1"/>
</dbReference>
<dbReference type="Gene3D" id="3.30.160.390">
    <property type="entry name" value="Integrase, DNA-binding domain"/>
    <property type="match status" value="1"/>
</dbReference>
<dbReference type="Gene3D" id="1.10.443.10">
    <property type="entry name" value="Intergrase catalytic core"/>
    <property type="match status" value="1"/>
</dbReference>
<dbReference type="InterPro" id="IPR044068">
    <property type="entry name" value="CB"/>
</dbReference>
<dbReference type="InterPro" id="IPR011010">
    <property type="entry name" value="DNA_brk_join_enz"/>
</dbReference>
<dbReference type="InterPro" id="IPR013762">
    <property type="entry name" value="Integrase-like_cat_sf"/>
</dbReference>
<dbReference type="InterPro" id="IPR002104">
    <property type="entry name" value="Integrase_catalytic"/>
</dbReference>
<dbReference type="InterPro" id="IPR038488">
    <property type="entry name" value="Integrase_DNA-bd_sf"/>
</dbReference>
<dbReference type="InterPro" id="IPR025166">
    <property type="entry name" value="Integrase_DNA_bind_dom"/>
</dbReference>
<dbReference type="InterPro" id="IPR010998">
    <property type="entry name" value="Integrase_recombinase_N"/>
</dbReference>
<dbReference type="InterPro" id="IPR053876">
    <property type="entry name" value="Phage_int_M"/>
</dbReference>
<dbReference type="InterPro" id="IPR050808">
    <property type="entry name" value="Phage_Integrase"/>
</dbReference>
<dbReference type="NCBIfam" id="NF007246">
    <property type="entry name" value="PRK09692.1"/>
    <property type="match status" value="1"/>
</dbReference>
<dbReference type="PANTHER" id="PTHR30629">
    <property type="entry name" value="PROPHAGE INTEGRASE"/>
    <property type="match status" value="1"/>
</dbReference>
<dbReference type="PANTHER" id="PTHR30629:SF6">
    <property type="entry name" value="PROPHAGE INTEGRASE INTA-RELATED"/>
    <property type="match status" value="1"/>
</dbReference>
<dbReference type="Pfam" id="PF13356">
    <property type="entry name" value="Arm-DNA-bind_3"/>
    <property type="match status" value="1"/>
</dbReference>
<dbReference type="Pfam" id="PF22022">
    <property type="entry name" value="Phage_int_M"/>
    <property type="match status" value="1"/>
</dbReference>
<dbReference type="Pfam" id="PF00589">
    <property type="entry name" value="Phage_integrase"/>
    <property type="match status" value="1"/>
</dbReference>
<dbReference type="SUPFAM" id="SSF56349">
    <property type="entry name" value="DNA breaking-rejoining enzymes"/>
    <property type="match status" value="1"/>
</dbReference>
<dbReference type="PROSITE" id="PS51900">
    <property type="entry name" value="CB"/>
    <property type="match status" value="1"/>
</dbReference>
<dbReference type="PROSITE" id="PS51898">
    <property type="entry name" value="TYR_RECOMBINASE"/>
    <property type="match status" value="1"/>
</dbReference>
<comment type="function">
    <text evidence="4">Integrase is necessary for integration of the phage into the host genome by site-specific recombination. In conjunction with excisionase, integrase is also necessary for excision of the prophage from the host genome. Part of the cryptic P4-like prophage CP4-57, it excises the prophage when overexpressed, which also requires integration host factor (encoded by ihfA and ihfB) (PubMed:7511583). Overexpression of AlpA leads to excision of the CP4-57 prophage, which inactivates ssrA (the gene upstream of the prophage) that encodes tmRNA which is required to rescue stalled ribosomes in a process known as trans-translation (PubMed:7511582).</text>
</comment>
<comment type="interaction">
    <interactant intactId="EBI-552967">
        <id>P32053</id>
    </interactant>
    <interactant intactId="EBI-542707">
        <id>P06959</id>
        <label>aceF</label>
    </interactant>
    <organismsDiffer>false</organismsDiffer>
    <experiments>3</experiments>
</comment>
<comment type="interaction">
    <interactant intactId="EBI-552967">
        <id>P32053</id>
    </interactant>
    <interactant intactId="EBI-558098">
        <id>P06864</id>
        <label>ebgA</label>
    </interactant>
    <organismsDiffer>false</organismsDiffer>
    <experiments>3</experiments>
</comment>
<comment type="induction">
    <text evidence="3">By AlpA (PubMed:7511582).</text>
</comment>
<comment type="disruption phenotype">
    <text evidence="4">Loss of excision of its prophage (PubMed:7511583).</text>
</comment>
<comment type="similarity">
    <text evidence="6">Belongs to the 'phage' integrase family.</text>
</comment>
<name>INTA_ECOLI</name>